<evidence type="ECO:0000250" key="1"/>
<evidence type="ECO:0000250" key="2">
    <source>
        <dbReference type="UniProtKB" id="P81869"/>
    </source>
</evidence>
<evidence type="ECO:0000250" key="3">
    <source>
        <dbReference type="UniProtKB" id="Q9Z0L3"/>
    </source>
</evidence>
<evidence type="ECO:0000255" key="4"/>
<evidence type="ECO:0000256" key="5">
    <source>
        <dbReference type="SAM" id="MobiDB-lite"/>
    </source>
</evidence>
<evidence type="ECO:0000303" key="6">
    <source>
    </source>
</evidence>
<evidence type="ECO:0000305" key="7"/>
<evidence type="ECO:0000312" key="8">
    <source>
        <dbReference type="HGNC" id="HGNC:8100"/>
    </source>
</evidence>
<keyword id="KW-0025">Alternative splicing</keyword>
<keyword id="KW-0106">Calcium</keyword>
<keyword id="KW-1015">Disulfide bond</keyword>
<keyword id="KW-0325">Glycoprotein</keyword>
<keyword id="KW-0479">Metal-binding</keyword>
<keyword id="KW-1185">Reference proteome</keyword>
<keyword id="KW-0677">Repeat</keyword>
<keyword id="KW-0964">Secreted</keyword>
<keyword id="KW-0732">Signal</keyword>
<sequence>MIAFLLTSVLMIPHAGGHPLDTPHLPQELPPGLPNNINITFFSGMFKNVESVAEIFDCLGPHFTWLQAVFTNFPVLIQFVNGMKCVAGLCPRDFEDYGCTCRFEMEGLPVDESDSCCFQHRRCYEEAAEMDCLQDPAKLSTEVNCVSKKIICESKDNCEHLLCTCDKAAIECLARSSLNSSLNLLDTSFCLAQTPETTIKEDLTTLLPRVVPVEPTDTSLTALSGEEAGHDQEGVGAARATSPPGSAEIVATRVTAKIVTLVPAGIKSLGLAVSSVENDPEETTEKACDRFTFLHLGSGDNMQVMPQLGEMLFCLTSRCPEEFESYGCYCGQEGRGEPRDDLDRCCLSHHCCLEQVRRLGCLLERLPWSPVVCVDHTPKCGGQSLCEKLLCACDQTAAECMTSASFNQSLKSPSRLGCPGQPAACEDSLHPVPAAPTLGSSSEEDSEEDPPQEDLGRAKRFLRKSLGPLGIGPLHGR</sequence>
<feature type="signal peptide" evidence="4">
    <location>
        <begin position="1"/>
        <end position="17"/>
    </location>
</feature>
<feature type="chain" id="PRO_0000022993" description="Otoconin-90">
    <location>
        <begin position="18"/>
        <end position="477"/>
    </location>
</feature>
<feature type="region of interest" description="Phospholipase A2-like 1">
    <location>
        <begin position="76"/>
        <end position="190"/>
    </location>
</feature>
<feature type="region of interest" description="Phospholipase A2-like 2">
    <location>
        <begin position="305"/>
        <end position="361"/>
    </location>
</feature>
<feature type="region of interest" description="Phospholipase A2-like 3">
    <location>
        <begin position="373"/>
        <end position="425"/>
    </location>
</feature>
<feature type="region of interest" description="Disordered" evidence="5">
    <location>
        <begin position="428"/>
        <end position="477"/>
    </location>
</feature>
<feature type="compositionally biased region" description="Acidic residues" evidence="5">
    <location>
        <begin position="442"/>
        <end position="452"/>
    </location>
</feature>
<feature type="glycosylation site" description="N-linked (GlcNAc...) asparagine" evidence="4">
    <location>
        <position position="38"/>
    </location>
</feature>
<feature type="glycosylation site" description="N-linked (GlcNAc...) asparagine" evidence="4">
    <location>
        <position position="179"/>
    </location>
</feature>
<feature type="glycosylation site" description="N-linked (GlcNAc...) asparagine" evidence="4">
    <location>
        <position position="407"/>
    </location>
</feature>
<feature type="disulfide bond" evidence="1">
    <location>
        <begin position="85"/>
        <end position="145"/>
    </location>
</feature>
<feature type="disulfide bond" evidence="1">
    <location>
        <begin position="99"/>
        <end position="190"/>
    </location>
</feature>
<feature type="disulfide bond" evidence="1">
    <location>
        <begin position="101"/>
        <end position="117"/>
    </location>
</feature>
<feature type="disulfide bond" evidence="1">
    <location>
        <begin position="116"/>
        <end position="172"/>
    </location>
</feature>
<feature type="disulfide bond" evidence="1">
    <location>
        <begin position="123"/>
        <end position="165"/>
    </location>
</feature>
<feature type="disulfide bond" evidence="1">
    <location>
        <begin position="132"/>
        <end position="158"/>
    </location>
</feature>
<feature type="disulfide bond" evidence="1">
    <location>
        <begin position="152"/>
        <end position="163"/>
    </location>
</feature>
<feature type="splice variant" id="VSP_059516" description="In isoform 2." evidence="6">
    <original>E</original>
    <variation>VAAETEADRLITLSKKK</variation>
    <location>
        <position position="227"/>
    </location>
</feature>
<feature type="sequence conflict" description="In Ref. 1; CAA78662." evidence="7" ref="1">
    <original>P</original>
    <variation>A</variation>
    <location>
        <position position="61"/>
    </location>
</feature>
<feature type="sequence conflict" description="In Ref. 1; CAA78662." evidence="7" ref="1">
    <original>Y</original>
    <variation>C</variation>
    <location>
        <position position="124"/>
    </location>
</feature>
<feature type="sequence conflict" description="In Ref. 1; CAA78662 and 2; BAG60230." evidence="7" ref="1 2">
    <original>N</original>
    <variation>D</variation>
    <location>
        <position position="144"/>
    </location>
</feature>
<feature type="sequence conflict" description="In Ref. 1; CAA78662 and 2; BAG60230." evidence="7" ref="1 2">
    <original>S</original>
    <variation>G</variation>
    <location>
        <position position="147"/>
    </location>
</feature>
<protein>
    <recommendedName>
        <fullName>Otoconin-90</fullName>
        <shortName>Oc90</shortName>
    </recommendedName>
    <alternativeName>
        <fullName>Phospholipase A2 homolog</fullName>
    </alternativeName>
</protein>
<organism>
    <name type="scientific">Homo sapiens</name>
    <name type="common">Human</name>
    <dbReference type="NCBI Taxonomy" id="9606"/>
    <lineage>
        <taxon>Eukaryota</taxon>
        <taxon>Metazoa</taxon>
        <taxon>Chordata</taxon>
        <taxon>Craniata</taxon>
        <taxon>Vertebrata</taxon>
        <taxon>Euteleostomi</taxon>
        <taxon>Mammalia</taxon>
        <taxon>Eutheria</taxon>
        <taxon>Euarchontoglires</taxon>
        <taxon>Primates</taxon>
        <taxon>Haplorrhini</taxon>
        <taxon>Catarrhini</taxon>
        <taxon>Hominidae</taxon>
        <taxon>Homo</taxon>
    </lineage>
</organism>
<name>OC90_HUMAN</name>
<dbReference type="EMBL" id="Z14310">
    <property type="protein sequence ID" value="CAA78662.1"/>
    <property type="status" value="ALT_SEQ"/>
    <property type="molecule type" value="mRNA"/>
</dbReference>
<dbReference type="EMBL" id="AK297911">
    <property type="protein sequence ID" value="BAG60230.1"/>
    <property type="molecule type" value="mRNA"/>
</dbReference>
<dbReference type="EMBL" id="AC092817">
    <property type="status" value="NOT_ANNOTATED_CDS"/>
    <property type="molecule type" value="Genomic_DNA"/>
</dbReference>
<dbReference type="EMBL" id="AC100868">
    <property type="status" value="NOT_ANNOTATED_CDS"/>
    <property type="molecule type" value="Genomic_DNA"/>
</dbReference>
<dbReference type="CCDS" id="CCDS47919.1">
    <molecule id="Q02509-1"/>
</dbReference>
<dbReference type="PIR" id="S30392">
    <property type="entry name" value="S30392"/>
</dbReference>
<dbReference type="RefSeq" id="NP_001073868.2">
    <molecule id="Q02509-1"/>
    <property type="nucleotide sequence ID" value="NM_001080399.3"/>
</dbReference>
<dbReference type="SMR" id="Q02509"/>
<dbReference type="BioGRID" id="609732">
    <property type="interactions" value="35"/>
</dbReference>
<dbReference type="FunCoup" id="Q02509">
    <property type="interactions" value="3"/>
</dbReference>
<dbReference type="IntAct" id="Q02509">
    <property type="interactions" value="22"/>
</dbReference>
<dbReference type="STRING" id="9606.ENSP00000254627"/>
<dbReference type="CarbonylDB" id="Q02509"/>
<dbReference type="GlyCosmos" id="Q02509">
    <property type="glycosylation" value="3 sites, No reported glycans"/>
</dbReference>
<dbReference type="GlyGen" id="Q02509">
    <property type="glycosylation" value="4 sites"/>
</dbReference>
<dbReference type="iPTMnet" id="Q02509"/>
<dbReference type="PhosphoSitePlus" id="Q02509"/>
<dbReference type="BioMuta" id="OC90"/>
<dbReference type="DMDM" id="215274202"/>
<dbReference type="jPOST" id="Q02509"/>
<dbReference type="MassIVE" id="Q02509"/>
<dbReference type="PaxDb" id="9606-ENSP00000254627"/>
<dbReference type="PeptideAtlas" id="Q02509"/>
<dbReference type="ProteomicsDB" id="58104">
    <molecule id="Q02509-1"/>
</dbReference>
<dbReference type="Antibodypedia" id="58400">
    <property type="antibodies" value="52 antibodies from 11 providers"/>
</dbReference>
<dbReference type="DNASU" id="729330"/>
<dbReference type="Ensembl" id="ENST00000254627.4">
    <molecule id="Q02509-1"/>
    <property type="protein sequence ID" value="ENSP00000254627.3"/>
    <property type="gene ID" value="ENSG00000253117.5"/>
</dbReference>
<dbReference type="GeneID" id="729330"/>
<dbReference type="KEGG" id="hsa:729330"/>
<dbReference type="MANE-Select" id="ENST00000254627.4">
    <property type="protein sequence ID" value="ENSP00000254627.3"/>
    <property type="RefSeq nucleotide sequence ID" value="NM_001080399.3"/>
    <property type="RefSeq protein sequence ID" value="NP_001073868.2"/>
</dbReference>
<dbReference type="UCSC" id="uc011lix.1">
    <molecule id="Q02509-1"/>
    <property type="organism name" value="human"/>
</dbReference>
<dbReference type="AGR" id="HGNC:8100"/>
<dbReference type="CTD" id="729330"/>
<dbReference type="DisGeNET" id="729330"/>
<dbReference type="GeneCards" id="OC90"/>
<dbReference type="HGNC" id="HGNC:8100">
    <property type="gene designation" value="OC90"/>
</dbReference>
<dbReference type="HPA" id="ENSG00000253117">
    <property type="expression patterns" value="Not detected"/>
</dbReference>
<dbReference type="MIM" id="601658">
    <property type="type" value="gene"/>
</dbReference>
<dbReference type="neXtProt" id="NX_Q02509"/>
<dbReference type="OpenTargets" id="ENSG00000253117"/>
<dbReference type="PharmGKB" id="PA31889"/>
<dbReference type="VEuPathDB" id="HostDB:ENSG00000253117"/>
<dbReference type="eggNOG" id="KOG4087">
    <property type="taxonomic scope" value="Eukaryota"/>
</dbReference>
<dbReference type="GeneTree" id="ENSGT00940000159042"/>
<dbReference type="HOGENOM" id="CLU_016613_1_0_1"/>
<dbReference type="InParanoid" id="Q02509"/>
<dbReference type="OMA" id="HCEHLLC"/>
<dbReference type="OrthoDB" id="8856917at2759"/>
<dbReference type="PAN-GO" id="Q02509">
    <property type="GO annotations" value="1 GO annotation based on evolutionary models"/>
</dbReference>
<dbReference type="PhylomeDB" id="Q02509"/>
<dbReference type="TreeFam" id="TF353106"/>
<dbReference type="PathwayCommons" id="Q02509"/>
<dbReference type="BioGRID-ORCS" id="729330">
    <property type="hits" value="10 hits in 1141 CRISPR screens"/>
</dbReference>
<dbReference type="GenomeRNAi" id="729330"/>
<dbReference type="Pharos" id="Q02509">
    <property type="development level" value="Tbio"/>
</dbReference>
<dbReference type="PRO" id="PR:Q02509"/>
<dbReference type="Proteomes" id="UP000005640">
    <property type="component" value="Chromosome 8"/>
</dbReference>
<dbReference type="RNAct" id="Q02509">
    <property type="molecule type" value="protein"/>
</dbReference>
<dbReference type="Bgee" id="ENSG00000253117">
    <property type="expression patterns" value="Expressed in male germ line stem cell (sensu Vertebrata) in testis and 9 other cell types or tissues"/>
</dbReference>
<dbReference type="GO" id="GO:0031012">
    <property type="term" value="C:extracellular matrix"/>
    <property type="evidence" value="ECO:0000318"/>
    <property type="project" value="GO_Central"/>
</dbReference>
<dbReference type="GO" id="GO:0005576">
    <property type="term" value="C:extracellular region"/>
    <property type="evidence" value="ECO:0007669"/>
    <property type="project" value="UniProtKB-SubCell"/>
</dbReference>
<dbReference type="GO" id="GO:0005509">
    <property type="term" value="F:calcium ion binding"/>
    <property type="evidence" value="ECO:0000250"/>
    <property type="project" value="UniProtKB"/>
</dbReference>
<dbReference type="GO" id="GO:0047498">
    <property type="term" value="F:calcium-dependent phospholipase A2 activity"/>
    <property type="evidence" value="ECO:0000318"/>
    <property type="project" value="GO_Central"/>
</dbReference>
<dbReference type="GO" id="GO:0005543">
    <property type="term" value="F:phospholipid binding"/>
    <property type="evidence" value="ECO:0000318"/>
    <property type="project" value="GO_Central"/>
</dbReference>
<dbReference type="GO" id="GO:0005198">
    <property type="term" value="F:structural molecule activity"/>
    <property type="evidence" value="ECO:0007669"/>
    <property type="project" value="Ensembl"/>
</dbReference>
<dbReference type="GO" id="GO:0050482">
    <property type="term" value="P:arachidonate secretion"/>
    <property type="evidence" value="ECO:0007669"/>
    <property type="project" value="InterPro"/>
</dbReference>
<dbReference type="GO" id="GO:0016042">
    <property type="term" value="P:lipid catabolic process"/>
    <property type="evidence" value="ECO:0007669"/>
    <property type="project" value="InterPro"/>
</dbReference>
<dbReference type="GO" id="GO:0045299">
    <property type="term" value="P:otolith mineralization"/>
    <property type="evidence" value="ECO:0000250"/>
    <property type="project" value="UniProtKB"/>
</dbReference>
<dbReference type="GO" id="GO:0046470">
    <property type="term" value="P:phosphatidylcholine metabolic process"/>
    <property type="evidence" value="ECO:0000318"/>
    <property type="project" value="GO_Central"/>
</dbReference>
<dbReference type="GO" id="GO:0046471">
    <property type="term" value="P:phosphatidylglycerol metabolic process"/>
    <property type="evidence" value="ECO:0000318"/>
    <property type="project" value="GO_Central"/>
</dbReference>
<dbReference type="CDD" id="cd04707">
    <property type="entry name" value="otoconin_90"/>
    <property type="match status" value="2"/>
</dbReference>
<dbReference type="FunFam" id="1.20.90.10:FF:000006">
    <property type="entry name" value="Otoconin-90"/>
    <property type="match status" value="1"/>
</dbReference>
<dbReference type="FunFam" id="1.20.90.10:FF:000009">
    <property type="entry name" value="Otoconin-90"/>
    <property type="match status" value="1"/>
</dbReference>
<dbReference type="Gene3D" id="1.20.90.10">
    <property type="entry name" value="Phospholipase A2 domain"/>
    <property type="match status" value="2"/>
</dbReference>
<dbReference type="InterPro" id="IPR041798">
    <property type="entry name" value="Otoconin-90"/>
</dbReference>
<dbReference type="InterPro" id="IPR001211">
    <property type="entry name" value="PLipase_A2"/>
</dbReference>
<dbReference type="InterPro" id="IPR033112">
    <property type="entry name" value="PLipase_A2_Asp_AS"/>
</dbReference>
<dbReference type="InterPro" id="IPR016090">
    <property type="entry name" value="PLipase_A2_dom"/>
</dbReference>
<dbReference type="InterPro" id="IPR036444">
    <property type="entry name" value="PLipase_A2_dom_sf"/>
</dbReference>
<dbReference type="InterPro" id="IPR033113">
    <property type="entry name" value="PLipase_A2_His_AS"/>
</dbReference>
<dbReference type="PANTHER" id="PTHR11716:SF1">
    <property type="entry name" value="OTOCONIN-90"/>
    <property type="match status" value="1"/>
</dbReference>
<dbReference type="PANTHER" id="PTHR11716">
    <property type="entry name" value="PHOSPHOLIPASE A2 FAMILY MEMBER"/>
    <property type="match status" value="1"/>
</dbReference>
<dbReference type="Pfam" id="PF00068">
    <property type="entry name" value="Phospholip_A2_1"/>
    <property type="match status" value="2"/>
</dbReference>
<dbReference type="PRINTS" id="PR00389">
    <property type="entry name" value="PHPHLIPASEA2"/>
</dbReference>
<dbReference type="SMART" id="SM00085">
    <property type="entry name" value="PA2c"/>
    <property type="match status" value="2"/>
</dbReference>
<dbReference type="SUPFAM" id="SSF48619">
    <property type="entry name" value="Phospholipase A2, PLA2"/>
    <property type="match status" value="2"/>
</dbReference>
<dbReference type="PROSITE" id="PS00119">
    <property type="entry name" value="PA2_ASP"/>
    <property type="match status" value="1"/>
</dbReference>
<dbReference type="PROSITE" id="PS00118">
    <property type="entry name" value="PA2_HIS"/>
    <property type="match status" value="2"/>
</dbReference>
<gene>
    <name evidence="8" type="primary">OC90</name>
    <name type="synonym">PLA2L</name>
</gene>
<reference key="1">
    <citation type="journal article" date="1993" name="Nucleic Acids Res.">
        <title>Splicing of a human endogenous retrovirus to a novel phospholipase A2 related gene.</title>
        <authorList>
            <person name="Feuchter-Murthy A.E."/>
            <person name="Freeman J.D."/>
            <person name="Mager D.L."/>
        </authorList>
    </citation>
    <scope>NUCLEOTIDE SEQUENCE [MRNA] (ISOFORM 2)</scope>
</reference>
<reference key="2">
    <citation type="journal article" date="2004" name="Nat. Genet.">
        <title>Complete sequencing and characterization of 21,243 full-length human cDNAs.</title>
        <authorList>
            <person name="Ota T."/>
            <person name="Suzuki Y."/>
            <person name="Nishikawa T."/>
            <person name="Otsuki T."/>
            <person name="Sugiyama T."/>
            <person name="Irie R."/>
            <person name="Wakamatsu A."/>
            <person name="Hayashi K."/>
            <person name="Sato H."/>
            <person name="Nagai K."/>
            <person name="Kimura K."/>
            <person name="Makita H."/>
            <person name="Sekine M."/>
            <person name="Obayashi M."/>
            <person name="Nishi T."/>
            <person name="Shibahara T."/>
            <person name="Tanaka T."/>
            <person name="Ishii S."/>
            <person name="Yamamoto J."/>
            <person name="Saito K."/>
            <person name="Kawai Y."/>
            <person name="Isono Y."/>
            <person name="Nakamura Y."/>
            <person name="Nagahari K."/>
            <person name="Murakami K."/>
            <person name="Yasuda T."/>
            <person name="Iwayanagi T."/>
            <person name="Wagatsuma M."/>
            <person name="Shiratori A."/>
            <person name="Sudo H."/>
            <person name="Hosoiri T."/>
            <person name="Kaku Y."/>
            <person name="Kodaira H."/>
            <person name="Kondo H."/>
            <person name="Sugawara M."/>
            <person name="Takahashi M."/>
            <person name="Kanda K."/>
            <person name="Yokoi T."/>
            <person name="Furuya T."/>
            <person name="Kikkawa E."/>
            <person name="Omura Y."/>
            <person name="Abe K."/>
            <person name="Kamihara K."/>
            <person name="Katsuta N."/>
            <person name="Sato K."/>
            <person name="Tanikawa M."/>
            <person name="Yamazaki M."/>
            <person name="Ninomiya K."/>
            <person name="Ishibashi T."/>
            <person name="Yamashita H."/>
            <person name="Murakawa K."/>
            <person name="Fujimori K."/>
            <person name="Tanai H."/>
            <person name="Kimata M."/>
            <person name="Watanabe M."/>
            <person name="Hiraoka S."/>
            <person name="Chiba Y."/>
            <person name="Ishida S."/>
            <person name="Ono Y."/>
            <person name="Takiguchi S."/>
            <person name="Watanabe S."/>
            <person name="Yosida M."/>
            <person name="Hotuta T."/>
            <person name="Kusano J."/>
            <person name="Kanehori K."/>
            <person name="Takahashi-Fujii A."/>
            <person name="Hara H."/>
            <person name="Tanase T.-O."/>
            <person name="Nomura Y."/>
            <person name="Togiya S."/>
            <person name="Komai F."/>
            <person name="Hara R."/>
            <person name="Takeuchi K."/>
            <person name="Arita M."/>
            <person name="Imose N."/>
            <person name="Musashino K."/>
            <person name="Yuuki H."/>
            <person name="Oshima A."/>
            <person name="Sasaki N."/>
            <person name="Aotsuka S."/>
            <person name="Yoshikawa Y."/>
            <person name="Matsunawa H."/>
            <person name="Ichihara T."/>
            <person name="Shiohata N."/>
            <person name="Sano S."/>
            <person name="Moriya S."/>
            <person name="Momiyama H."/>
            <person name="Satoh N."/>
            <person name="Takami S."/>
            <person name="Terashima Y."/>
            <person name="Suzuki O."/>
            <person name="Nakagawa S."/>
            <person name="Senoh A."/>
            <person name="Mizoguchi H."/>
            <person name="Goto Y."/>
            <person name="Shimizu F."/>
            <person name="Wakebe H."/>
            <person name="Hishigaki H."/>
            <person name="Watanabe T."/>
            <person name="Sugiyama A."/>
            <person name="Takemoto M."/>
            <person name="Kawakami B."/>
            <person name="Yamazaki M."/>
            <person name="Watanabe K."/>
            <person name="Kumagai A."/>
            <person name="Itakura S."/>
            <person name="Fukuzumi Y."/>
            <person name="Fujimori Y."/>
            <person name="Komiyama M."/>
            <person name="Tashiro H."/>
            <person name="Tanigami A."/>
            <person name="Fujiwara T."/>
            <person name="Ono T."/>
            <person name="Yamada K."/>
            <person name="Fujii Y."/>
            <person name="Ozaki K."/>
            <person name="Hirao M."/>
            <person name="Ohmori Y."/>
            <person name="Kawabata A."/>
            <person name="Hikiji T."/>
            <person name="Kobatake N."/>
            <person name="Inagaki H."/>
            <person name="Ikema Y."/>
            <person name="Okamoto S."/>
            <person name="Okitani R."/>
            <person name="Kawakami T."/>
            <person name="Noguchi S."/>
            <person name="Itoh T."/>
            <person name="Shigeta K."/>
            <person name="Senba T."/>
            <person name="Matsumura K."/>
            <person name="Nakajima Y."/>
            <person name="Mizuno T."/>
            <person name="Morinaga M."/>
            <person name="Sasaki M."/>
            <person name="Togashi T."/>
            <person name="Oyama M."/>
            <person name="Hata H."/>
            <person name="Watanabe M."/>
            <person name="Komatsu T."/>
            <person name="Mizushima-Sugano J."/>
            <person name="Satoh T."/>
            <person name="Shirai Y."/>
            <person name="Takahashi Y."/>
            <person name="Nakagawa K."/>
            <person name="Okumura K."/>
            <person name="Nagase T."/>
            <person name="Nomura N."/>
            <person name="Kikuchi H."/>
            <person name="Masuho Y."/>
            <person name="Yamashita R."/>
            <person name="Nakai K."/>
            <person name="Yada T."/>
            <person name="Nakamura Y."/>
            <person name="Ohara O."/>
            <person name="Isogai T."/>
            <person name="Sugano S."/>
        </authorList>
    </citation>
    <scope>NUCLEOTIDE SEQUENCE [LARGE SCALE MRNA] (ISOFORM 1)</scope>
    <source>
        <tissue>Embryo</tissue>
    </source>
</reference>
<reference key="3">
    <citation type="journal article" date="2006" name="Nature">
        <title>DNA sequence and analysis of human chromosome 8.</title>
        <authorList>
            <person name="Nusbaum C."/>
            <person name="Mikkelsen T.S."/>
            <person name="Zody M.C."/>
            <person name="Asakawa S."/>
            <person name="Taudien S."/>
            <person name="Garber M."/>
            <person name="Kodira C.D."/>
            <person name="Schueler M.G."/>
            <person name="Shimizu A."/>
            <person name="Whittaker C.A."/>
            <person name="Chang J.L."/>
            <person name="Cuomo C.A."/>
            <person name="Dewar K."/>
            <person name="FitzGerald M.G."/>
            <person name="Yang X."/>
            <person name="Allen N.R."/>
            <person name="Anderson S."/>
            <person name="Asakawa T."/>
            <person name="Blechschmidt K."/>
            <person name="Bloom T."/>
            <person name="Borowsky M.L."/>
            <person name="Butler J."/>
            <person name="Cook A."/>
            <person name="Corum B."/>
            <person name="DeArellano K."/>
            <person name="DeCaprio D."/>
            <person name="Dooley K.T."/>
            <person name="Dorris L. III"/>
            <person name="Engels R."/>
            <person name="Gloeckner G."/>
            <person name="Hafez N."/>
            <person name="Hagopian D.S."/>
            <person name="Hall J.L."/>
            <person name="Ishikawa S.K."/>
            <person name="Jaffe D.B."/>
            <person name="Kamat A."/>
            <person name="Kudoh J."/>
            <person name="Lehmann R."/>
            <person name="Lokitsang T."/>
            <person name="Macdonald P."/>
            <person name="Major J.E."/>
            <person name="Matthews C.D."/>
            <person name="Mauceli E."/>
            <person name="Menzel U."/>
            <person name="Mihalev A.H."/>
            <person name="Minoshima S."/>
            <person name="Murayama Y."/>
            <person name="Naylor J.W."/>
            <person name="Nicol R."/>
            <person name="Nguyen C."/>
            <person name="O'Leary S.B."/>
            <person name="O'Neill K."/>
            <person name="Parker S.C.J."/>
            <person name="Polley A."/>
            <person name="Raymond C.K."/>
            <person name="Reichwald K."/>
            <person name="Rodriguez J."/>
            <person name="Sasaki T."/>
            <person name="Schilhabel M."/>
            <person name="Siddiqui R."/>
            <person name="Smith C.L."/>
            <person name="Sneddon T.P."/>
            <person name="Talamas J.A."/>
            <person name="Tenzin P."/>
            <person name="Topham K."/>
            <person name="Venkataraman V."/>
            <person name="Wen G."/>
            <person name="Yamazaki S."/>
            <person name="Young S.K."/>
            <person name="Zeng Q."/>
            <person name="Zimmer A.R."/>
            <person name="Rosenthal A."/>
            <person name="Birren B.W."/>
            <person name="Platzer M."/>
            <person name="Shimizu N."/>
            <person name="Lander E.S."/>
        </authorList>
    </citation>
    <scope>NUCLEOTIDE SEQUENCE [LARGE SCALE GENOMIC DNA]</scope>
</reference>
<accession>Q02509</accession>
<accession>B4DNG8</accession>
<proteinExistence type="evidence at transcript level"/>
<comment type="function">
    <text evidence="3">Major protein of the otoconia, a calcium carbonate structure in the saccule and utricle of the ear. Together with OTOL1, acts as a scaffold for otoconia biomineralization: sequesters calcium and forms interconnecting fibrils between otoconia that are incorporated into the calcium crystal structure. Together with OTOL1, modulates calcite crystal morphology and growth kinetics. It is unlikely that this protein has phospholipase A2 activity.</text>
</comment>
<comment type="subunit">
    <text evidence="3">Interacts with OTOL1.</text>
</comment>
<comment type="subcellular location">
    <subcellularLocation>
        <location evidence="2">Secreted</location>
    </subcellularLocation>
</comment>
<comment type="alternative products">
    <event type="alternative splicing"/>
    <isoform>
        <id>Q02509-1</id>
        <name>1</name>
        <sequence type="displayed"/>
    </isoform>
    <isoform>
        <id>Q02509-3</id>
        <name>2</name>
        <sequence type="described" ref="VSP_059516"/>
    </isoform>
</comment>
<comment type="domain">
    <text>Consists of 3 PA2-type domains.</text>
</comment>
<comment type="similarity">
    <text evidence="7">Belongs to the phospholipase A2 family.</text>
</comment>
<comment type="sequence caution" evidence="7">
    <conflict type="erroneous initiation">
        <sequence resource="EMBL-CDS" id="CAA78662"/>
    </conflict>
    <text>Extended N-terminus.</text>
</comment>
<comment type="sequence caution" evidence="7">
    <conflict type="miscellaneous discrepancy">
        <sequence resource="EMBL-CDS" id="CAA78662"/>
    </conflict>
    <text>Chimeric cDNA.</text>
</comment>